<name>SYFA_NOVAD</name>
<feature type="chain" id="PRO_1000006866" description="Phenylalanine--tRNA ligase alpha subunit">
    <location>
        <begin position="1"/>
        <end position="366"/>
    </location>
</feature>
<feature type="binding site" evidence="1">
    <location>
        <position position="259"/>
    </location>
    <ligand>
        <name>Mg(2+)</name>
        <dbReference type="ChEBI" id="CHEBI:18420"/>
        <note>shared with beta subunit</note>
    </ligand>
</feature>
<sequence length="366" mass="39734">MEQLDQQQAETLSAIAQAATPEAVEAIRVSALGKQGWVSALLKSLGGMTPEQRQSEGPKIHAAREAVTTALAERKSALEGAALEARLAAETVDLSLPAPDLAKGSVHPVSQVMDELAEIFADMGFAVASGPEIEDDWHNFTALNMPETHPARAMHDTFYFPDKDAEGRSMLLRTHTSPVQIRSMLKAGAPLRIIAPGRVYRSDSDATHTPMFHQIEGLVIDKGIHLGHLKWTLETFLKAFFERDDIVLRLRPSYFPFTEPSVEVDVGYTLVNGKRVVGGSGDADNGGWMEVLGSGMVNRKVIEFGGLDPDEWQGFAFGTGVDRLAMLKYGMDDLRAFFDGDARWLGHYGFGALDVPTLSGGVGVRS</sequence>
<comment type="catalytic activity">
    <reaction evidence="1">
        <text>tRNA(Phe) + L-phenylalanine + ATP = L-phenylalanyl-tRNA(Phe) + AMP + diphosphate + H(+)</text>
        <dbReference type="Rhea" id="RHEA:19413"/>
        <dbReference type="Rhea" id="RHEA-COMP:9668"/>
        <dbReference type="Rhea" id="RHEA-COMP:9699"/>
        <dbReference type="ChEBI" id="CHEBI:15378"/>
        <dbReference type="ChEBI" id="CHEBI:30616"/>
        <dbReference type="ChEBI" id="CHEBI:33019"/>
        <dbReference type="ChEBI" id="CHEBI:58095"/>
        <dbReference type="ChEBI" id="CHEBI:78442"/>
        <dbReference type="ChEBI" id="CHEBI:78531"/>
        <dbReference type="ChEBI" id="CHEBI:456215"/>
        <dbReference type="EC" id="6.1.1.20"/>
    </reaction>
</comment>
<comment type="cofactor">
    <cofactor evidence="1">
        <name>Mg(2+)</name>
        <dbReference type="ChEBI" id="CHEBI:18420"/>
    </cofactor>
    <text evidence="1">Binds 2 magnesium ions per tetramer.</text>
</comment>
<comment type="subunit">
    <text evidence="1">Tetramer of two alpha and two beta subunits.</text>
</comment>
<comment type="subcellular location">
    <subcellularLocation>
        <location evidence="1">Cytoplasm</location>
    </subcellularLocation>
</comment>
<comment type="similarity">
    <text evidence="1">Belongs to the class-II aminoacyl-tRNA synthetase family. Phe-tRNA synthetase alpha subunit type 1 subfamily.</text>
</comment>
<protein>
    <recommendedName>
        <fullName evidence="1">Phenylalanine--tRNA ligase alpha subunit</fullName>
        <ecNumber evidence="1">6.1.1.20</ecNumber>
    </recommendedName>
    <alternativeName>
        <fullName evidence="1">Phenylalanyl-tRNA synthetase alpha subunit</fullName>
        <shortName evidence="1">PheRS</shortName>
    </alternativeName>
</protein>
<proteinExistence type="inferred from homology"/>
<accession>Q2GAI8</accession>
<evidence type="ECO:0000255" key="1">
    <source>
        <dbReference type="HAMAP-Rule" id="MF_00281"/>
    </source>
</evidence>
<reference key="1">
    <citation type="submission" date="2006-01" db="EMBL/GenBank/DDBJ databases">
        <title>Complete sequence of Novosphingobium aromaticivorans DSM 12444.</title>
        <authorList>
            <consortium name="US DOE Joint Genome Institute"/>
            <person name="Copeland A."/>
            <person name="Lucas S."/>
            <person name="Lapidus A."/>
            <person name="Barry K."/>
            <person name="Detter J.C."/>
            <person name="Glavina T."/>
            <person name="Hammon N."/>
            <person name="Israni S."/>
            <person name="Pitluck S."/>
            <person name="Chain P."/>
            <person name="Malfatti S."/>
            <person name="Shin M."/>
            <person name="Vergez L."/>
            <person name="Schmutz J."/>
            <person name="Larimer F."/>
            <person name="Land M."/>
            <person name="Kyrpides N."/>
            <person name="Ivanova N."/>
            <person name="Fredrickson J."/>
            <person name="Balkwill D."/>
            <person name="Romine M.F."/>
            <person name="Richardson P."/>
        </authorList>
    </citation>
    <scope>NUCLEOTIDE SEQUENCE [LARGE SCALE GENOMIC DNA]</scope>
    <source>
        <strain>ATCC 700278 / DSM 12444 / CCUG 56034 / CIP 105152 / NBRC 16084 / F199</strain>
    </source>
</reference>
<dbReference type="EC" id="6.1.1.20" evidence="1"/>
<dbReference type="EMBL" id="CP000248">
    <property type="protein sequence ID" value="ABD25135.1"/>
    <property type="molecule type" value="Genomic_DNA"/>
</dbReference>
<dbReference type="RefSeq" id="WP_011444349.1">
    <property type="nucleotide sequence ID" value="NC_007794.1"/>
</dbReference>
<dbReference type="SMR" id="Q2GAI8"/>
<dbReference type="STRING" id="279238.Saro_0688"/>
<dbReference type="KEGG" id="nar:Saro_0688"/>
<dbReference type="eggNOG" id="COG0016">
    <property type="taxonomic scope" value="Bacteria"/>
</dbReference>
<dbReference type="HOGENOM" id="CLU_025086_0_1_5"/>
<dbReference type="Proteomes" id="UP000009134">
    <property type="component" value="Chromosome"/>
</dbReference>
<dbReference type="GO" id="GO:0005737">
    <property type="term" value="C:cytoplasm"/>
    <property type="evidence" value="ECO:0007669"/>
    <property type="project" value="UniProtKB-SubCell"/>
</dbReference>
<dbReference type="GO" id="GO:0005524">
    <property type="term" value="F:ATP binding"/>
    <property type="evidence" value="ECO:0007669"/>
    <property type="project" value="UniProtKB-UniRule"/>
</dbReference>
<dbReference type="GO" id="GO:0000287">
    <property type="term" value="F:magnesium ion binding"/>
    <property type="evidence" value="ECO:0007669"/>
    <property type="project" value="UniProtKB-UniRule"/>
</dbReference>
<dbReference type="GO" id="GO:0004826">
    <property type="term" value="F:phenylalanine-tRNA ligase activity"/>
    <property type="evidence" value="ECO:0007669"/>
    <property type="project" value="UniProtKB-UniRule"/>
</dbReference>
<dbReference type="GO" id="GO:0000049">
    <property type="term" value="F:tRNA binding"/>
    <property type="evidence" value="ECO:0007669"/>
    <property type="project" value="InterPro"/>
</dbReference>
<dbReference type="GO" id="GO:0006432">
    <property type="term" value="P:phenylalanyl-tRNA aminoacylation"/>
    <property type="evidence" value="ECO:0007669"/>
    <property type="project" value="UniProtKB-UniRule"/>
</dbReference>
<dbReference type="CDD" id="cd00496">
    <property type="entry name" value="PheRS_alpha_core"/>
    <property type="match status" value="1"/>
</dbReference>
<dbReference type="FunFam" id="3.30.930.10:FF:000003">
    <property type="entry name" value="Phenylalanine--tRNA ligase alpha subunit"/>
    <property type="match status" value="1"/>
</dbReference>
<dbReference type="Gene3D" id="3.30.930.10">
    <property type="entry name" value="Bira Bifunctional Protein, Domain 2"/>
    <property type="match status" value="1"/>
</dbReference>
<dbReference type="HAMAP" id="MF_00281">
    <property type="entry name" value="Phe_tRNA_synth_alpha1"/>
    <property type="match status" value="1"/>
</dbReference>
<dbReference type="InterPro" id="IPR006195">
    <property type="entry name" value="aa-tRNA-synth_II"/>
</dbReference>
<dbReference type="InterPro" id="IPR045864">
    <property type="entry name" value="aa-tRNA-synth_II/BPL/LPL"/>
</dbReference>
<dbReference type="InterPro" id="IPR004529">
    <property type="entry name" value="Phe-tRNA-synth_IIc_asu"/>
</dbReference>
<dbReference type="InterPro" id="IPR004188">
    <property type="entry name" value="Phe-tRNA_ligase_II_N"/>
</dbReference>
<dbReference type="InterPro" id="IPR022911">
    <property type="entry name" value="Phe_tRNA_ligase_alpha1_bac"/>
</dbReference>
<dbReference type="InterPro" id="IPR002319">
    <property type="entry name" value="Phenylalanyl-tRNA_Synthase"/>
</dbReference>
<dbReference type="InterPro" id="IPR010978">
    <property type="entry name" value="tRNA-bd_arm"/>
</dbReference>
<dbReference type="NCBIfam" id="TIGR00468">
    <property type="entry name" value="pheS"/>
    <property type="match status" value="1"/>
</dbReference>
<dbReference type="PANTHER" id="PTHR11538:SF41">
    <property type="entry name" value="PHENYLALANINE--TRNA LIGASE, MITOCHONDRIAL"/>
    <property type="match status" value="1"/>
</dbReference>
<dbReference type="PANTHER" id="PTHR11538">
    <property type="entry name" value="PHENYLALANYL-TRNA SYNTHETASE"/>
    <property type="match status" value="1"/>
</dbReference>
<dbReference type="Pfam" id="PF02912">
    <property type="entry name" value="Phe_tRNA-synt_N"/>
    <property type="match status" value="1"/>
</dbReference>
<dbReference type="Pfam" id="PF01409">
    <property type="entry name" value="tRNA-synt_2d"/>
    <property type="match status" value="1"/>
</dbReference>
<dbReference type="SUPFAM" id="SSF55681">
    <property type="entry name" value="Class II aaRS and biotin synthetases"/>
    <property type="match status" value="1"/>
</dbReference>
<dbReference type="SUPFAM" id="SSF46589">
    <property type="entry name" value="tRNA-binding arm"/>
    <property type="match status" value="1"/>
</dbReference>
<dbReference type="PROSITE" id="PS50862">
    <property type="entry name" value="AA_TRNA_LIGASE_II"/>
    <property type="match status" value="1"/>
</dbReference>
<keyword id="KW-0030">Aminoacyl-tRNA synthetase</keyword>
<keyword id="KW-0067">ATP-binding</keyword>
<keyword id="KW-0963">Cytoplasm</keyword>
<keyword id="KW-0436">Ligase</keyword>
<keyword id="KW-0460">Magnesium</keyword>
<keyword id="KW-0479">Metal-binding</keyword>
<keyword id="KW-0547">Nucleotide-binding</keyword>
<keyword id="KW-0648">Protein biosynthesis</keyword>
<keyword id="KW-1185">Reference proteome</keyword>
<gene>
    <name evidence="1" type="primary">pheS</name>
    <name type="ordered locus">Saro_0688</name>
</gene>
<organism>
    <name type="scientific">Novosphingobium aromaticivorans (strain ATCC 700278 / DSM 12444 / CCUG 56034 / CIP 105152 / NBRC 16084 / F199)</name>
    <dbReference type="NCBI Taxonomy" id="279238"/>
    <lineage>
        <taxon>Bacteria</taxon>
        <taxon>Pseudomonadati</taxon>
        <taxon>Pseudomonadota</taxon>
        <taxon>Alphaproteobacteria</taxon>
        <taxon>Sphingomonadales</taxon>
        <taxon>Sphingomonadaceae</taxon>
        <taxon>Novosphingobium</taxon>
    </lineage>
</organism>